<organism>
    <name type="scientific">Clostridium perfringens (strain 13 / Type A)</name>
    <dbReference type="NCBI Taxonomy" id="195102"/>
    <lineage>
        <taxon>Bacteria</taxon>
        <taxon>Bacillati</taxon>
        <taxon>Bacillota</taxon>
        <taxon>Clostridia</taxon>
        <taxon>Eubacteriales</taxon>
        <taxon>Clostridiaceae</taxon>
        <taxon>Clostridium</taxon>
    </lineage>
</organism>
<evidence type="ECO:0000255" key="1">
    <source>
        <dbReference type="HAMAP-Rule" id="MF_01445"/>
    </source>
</evidence>
<gene>
    <name evidence="1" type="primary">tsaD</name>
    <name type="synonym">gcp</name>
    <name type="ordered locus">CPE2232</name>
</gene>
<dbReference type="EC" id="2.3.1.234" evidence="1"/>
<dbReference type="EMBL" id="BA000016">
    <property type="protein sequence ID" value="BAB81938.1"/>
    <property type="molecule type" value="Genomic_DNA"/>
</dbReference>
<dbReference type="RefSeq" id="WP_003452273.1">
    <property type="nucleotide sequence ID" value="NC_003366.1"/>
</dbReference>
<dbReference type="SMR" id="Q8XI89"/>
<dbReference type="STRING" id="195102.gene:10491511"/>
<dbReference type="GeneID" id="93001226"/>
<dbReference type="KEGG" id="cpe:CPE2232"/>
<dbReference type="HOGENOM" id="CLU_023208_0_2_9"/>
<dbReference type="Proteomes" id="UP000000818">
    <property type="component" value="Chromosome"/>
</dbReference>
<dbReference type="GO" id="GO:0005737">
    <property type="term" value="C:cytoplasm"/>
    <property type="evidence" value="ECO:0007669"/>
    <property type="project" value="UniProtKB-SubCell"/>
</dbReference>
<dbReference type="GO" id="GO:0005506">
    <property type="term" value="F:iron ion binding"/>
    <property type="evidence" value="ECO:0007669"/>
    <property type="project" value="UniProtKB-UniRule"/>
</dbReference>
<dbReference type="GO" id="GO:0061711">
    <property type="term" value="F:N(6)-L-threonylcarbamoyladenine synthase activity"/>
    <property type="evidence" value="ECO:0007669"/>
    <property type="project" value="UniProtKB-EC"/>
</dbReference>
<dbReference type="GO" id="GO:0002949">
    <property type="term" value="P:tRNA threonylcarbamoyladenosine modification"/>
    <property type="evidence" value="ECO:0007669"/>
    <property type="project" value="UniProtKB-UniRule"/>
</dbReference>
<dbReference type="CDD" id="cd24133">
    <property type="entry name" value="ASKHA_NBD_TsaD_bac"/>
    <property type="match status" value="1"/>
</dbReference>
<dbReference type="FunFam" id="3.30.420.40:FF:000012">
    <property type="entry name" value="tRNA N6-adenosine threonylcarbamoyltransferase"/>
    <property type="match status" value="1"/>
</dbReference>
<dbReference type="FunFam" id="3.30.420.40:FF:000040">
    <property type="entry name" value="tRNA N6-adenosine threonylcarbamoyltransferase"/>
    <property type="match status" value="1"/>
</dbReference>
<dbReference type="Gene3D" id="3.30.420.40">
    <property type="match status" value="2"/>
</dbReference>
<dbReference type="HAMAP" id="MF_01445">
    <property type="entry name" value="TsaD"/>
    <property type="match status" value="1"/>
</dbReference>
<dbReference type="InterPro" id="IPR043129">
    <property type="entry name" value="ATPase_NBD"/>
</dbReference>
<dbReference type="InterPro" id="IPR000905">
    <property type="entry name" value="Gcp-like_dom"/>
</dbReference>
<dbReference type="InterPro" id="IPR017861">
    <property type="entry name" value="KAE1/TsaD"/>
</dbReference>
<dbReference type="InterPro" id="IPR017860">
    <property type="entry name" value="Peptidase_M22_CS"/>
</dbReference>
<dbReference type="InterPro" id="IPR022450">
    <property type="entry name" value="TsaD"/>
</dbReference>
<dbReference type="NCBIfam" id="TIGR00329">
    <property type="entry name" value="gcp_kae1"/>
    <property type="match status" value="1"/>
</dbReference>
<dbReference type="NCBIfam" id="TIGR03723">
    <property type="entry name" value="T6A_TsaD_YgjD"/>
    <property type="match status" value="1"/>
</dbReference>
<dbReference type="PANTHER" id="PTHR11735">
    <property type="entry name" value="TRNA N6-ADENOSINE THREONYLCARBAMOYLTRANSFERASE"/>
    <property type="match status" value="1"/>
</dbReference>
<dbReference type="PANTHER" id="PTHR11735:SF6">
    <property type="entry name" value="TRNA N6-ADENOSINE THREONYLCARBAMOYLTRANSFERASE, MITOCHONDRIAL"/>
    <property type="match status" value="1"/>
</dbReference>
<dbReference type="Pfam" id="PF00814">
    <property type="entry name" value="TsaD"/>
    <property type="match status" value="1"/>
</dbReference>
<dbReference type="PRINTS" id="PR00789">
    <property type="entry name" value="OSIALOPTASE"/>
</dbReference>
<dbReference type="SUPFAM" id="SSF53067">
    <property type="entry name" value="Actin-like ATPase domain"/>
    <property type="match status" value="2"/>
</dbReference>
<dbReference type="PROSITE" id="PS01016">
    <property type="entry name" value="GLYCOPROTEASE"/>
    <property type="match status" value="1"/>
</dbReference>
<sequence>MDKKIILAIESSCDETAAAVVVNGREVLSNIISSQIDIHTKFGGVVPEVASRKHIEAINAVVEEALEVAGVTFDDIDAIAVTYGPGLVGALLVGLQYAKGLAYSLDKPLIGVNHIEGHISANFIDHKDLEPPFVCLVVSGGHTFVVHVEDYGKFEIIGETRDDAAGEAFDKVARAVGLGYPGGPKIDKLAKEGNSDAIKFPKANFHDDTLDFSFSGVKSAVLNYLNKMEMKNEEINKADVVASFQKAVVEVLTDNAIKTCKMRKADKIAIAGGVASNSALRENLLREGEKRGIKVLFPSPILCTDNAAMIGSAAYFELLKGNVSEMSLNAKPNLRLGER</sequence>
<proteinExistence type="inferred from homology"/>
<accession>Q8XI89</accession>
<protein>
    <recommendedName>
        <fullName evidence="1">tRNA N6-adenosine threonylcarbamoyltransferase</fullName>
        <ecNumber evidence="1">2.3.1.234</ecNumber>
    </recommendedName>
    <alternativeName>
        <fullName evidence="1">N6-L-threonylcarbamoyladenine synthase</fullName>
        <shortName evidence="1">t(6)A synthase</shortName>
    </alternativeName>
    <alternativeName>
        <fullName evidence="1">t(6)A37 threonylcarbamoyladenosine biosynthesis protein TsaD</fullName>
    </alternativeName>
    <alternativeName>
        <fullName evidence="1">tRNA threonylcarbamoyladenosine biosynthesis protein TsaD</fullName>
    </alternativeName>
</protein>
<name>TSAD_CLOPE</name>
<keyword id="KW-0012">Acyltransferase</keyword>
<keyword id="KW-0963">Cytoplasm</keyword>
<keyword id="KW-0408">Iron</keyword>
<keyword id="KW-0479">Metal-binding</keyword>
<keyword id="KW-1185">Reference proteome</keyword>
<keyword id="KW-0808">Transferase</keyword>
<keyword id="KW-0819">tRNA processing</keyword>
<reference key="1">
    <citation type="journal article" date="2002" name="Proc. Natl. Acad. Sci. U.S.A.">
        <title>Complete genome sequence of Clostridium perfringens, an anaerobic flesh-eater.</title>
        <authorList>
            <person name="Shimizu T."/>
            <person name="Ohtani K."/>
            <person name="Hirakawa H."/>
            <person name="Ohshima K."/>
            <person name="Yamashita A."/>
            <person name="Shiba T."/>
            <person name="Ogasawara N."/>
            <person name="Hattori M."/>
            <person name="Kuhara S."/>
            <person name="Hayashi H."/>
        </authorList>
    </citation>
    <scope>NUCLEOTIDE SEQUENCE [LARGE SCALE GENOMIC DNA]</scope>
    <source>
        <strain>13 / Type A</strain>
    </source>
</reference>
<comment type="function">
    <text evidence="1">Required for the formation of a threonylcarbamoyl group on adenosine at position 37 (t(6)A37) in tRNAs that read codons beginning with adenine. Is involved in the transfer of the threonylcarbamoyl moiety of threonylcarbamoyl-AMP (TC-AMP) to the N6 group of A37, together with TsaE and TsaB. TsaD likely plays a direct catalytic role in this reaction.</text>
</comment>
<comment type="catalytic activity">
    <reaction evidence="1">
        <text>L-threonylcarbamoyladenylate + adenosine(37) in tRNA = N(6)-L-threonylcarbamoyladenosine(37) in tRNA + AMP + H(+)</text>
        <dbReference type="Rhea" id="RHEA:37059"/>
        <dbReference type="Rhea" id="RHEA-COMP:10162"/>
        <dbReference type="Rhea" id="RHEA-COMP:10163"/>
        <dbReference type="ChEBI" id="CHEBI:15378"/>
        <dbReference type="ChEBI" id="CHEBI:73682"/>
        <dbReference type="ChEBI" id="CHEBI:74411"/>
        <dbReference type="ChEBI" id="CHEBI:74418"/>
        <dbReference type="ChEBI" id="CHEBI:456215"/>
        <dbReference type="EC" id="2.3.1.234"/>
    </reaction>
</comment>
<comment type="cofactor">
    <cofactor evidence="1">
        <name>Fe(2+)</name>
        <dbReference type="ChEBI" id="CHEBI:29033"/>
    </cofactor>
    <text evidence="1">Binds 1 Fe(2+) ion per subunit.</text>
</comment>
<comment type="subcellular location">
    <subcellularLocation>
        <location evidence="1">Cytoplasm</location>
    </subcellularLocation>
</comment>
<comment type="similarity">
    <text evidence="1">Belongs to the KAE1 / TsaD family.</text>
</comment>
<feature type="chain" id="PRO_0000303330" description="tRNA N6-adenosine threonylcarbamoyltransferase">
    <location>
        <begin position="1"/>
        <end position="339"/>
    </location>
</feature>
<feature type="binding site" evidence="1">
    <location>
        <position position="114"/>
    </location>
    <ligand>
        <name>Fe cation</name>
        <dbReference type="ChEBI" id="CHEBI:24875"/>
    </ligand>
</feature>
<feature type="binding site" evidence="1">
    <location>
        <position position="118"/>
    </location>
    <ligand>
        <name>Fe cation</name>
        <dbReference type="ChEBI" id="CHEBI:24875"/>
    </ligand>
</feature>
<feature type="binding site" evidence="1">
    <location>
        <begin position="137"/>
        <end position="141"/>
    </location>
    <ligand>
        <name>substrate</name>
    </ligand>
</feature>
<feature type="binding site" evidence="1">
    <location>
        <position position="170"/>
    </location>
    <ligand>
        <name>substrate</name>
    </ligand>
</feature>
<feature type="binding site" evidence="1">
    <location>
        <position position="183"/>
    </location>
    <ligand>
        <name>substrate</name>
    </ligand>
</feature>
<feature type="binding site" evidence="1">
    <location>
        <position position="187"/>
    </location>
    <ligand>
        <name>substrate</name>
    </ligand>
</feature>
<feature type="binding site" evidence="1">
    <location>
        <position position="277"/>
    </location>
    <ligand>
        <name>substrate</name>
    </ligand>
</feature>
<feature type="binding site" evidence="1">
    <location>
        <position position="305"/>
    </location>
    <ligand>
        <name>Fe cation</name>
        <dbReference type="ChEBI" id="CHEBI:24875"/>
    </ligand>
</feature>